<proteinExistence type="inferred from homology"/>
<reference key="1">
    <citation type="journal article" date="2015" name="Genome Announc.">
        <title>Complete genome sequence of Anaeromyxobacter sp. Fw109-5, an anaerobic, metal-reducing bacterium isolated from a contaminated subsurface environment.</title>
        <authorList>
            <person name="Hwang C."/>
            <person name="Copeland A."/>
            <person name="Lucas S."/>
            <person name="Lapidus A."/>
            <person name="Barry K."/>
            <person name="Glavina Del Rio T."/>
            <person name="Dalin E."/>
            <person name="Tice H."/>
            <person name="Pitluck S."/>
            <person name="Sims D."/>
            <person name="Brettin T."/>
            <person name="Bruce D.C."/>
            <person name="Detter J.C."/>
            <person name="Han C.S."/>
            <person name="Schmutz J."/>
            <person name="Larimer F.W."/>
            <person name="Land M.L."/>
            <person name="Hauser L.J."/>
            <person name="Kyrpides N."/>
            <person name="Lykidis A."/>
            <person name="Richardson P."/>
            <person name="Belieav A."/>
            <person name="Sanford R.A."/>
            <person name="Loeffler F.E."/>
            <person name="Fields M.W."/>
        </authorList>
    </citation>
    <scope>NUCLEOTIDE SEQUENCE [LARGE SCALE GENOMIC DNA]</scope>
    <source>
        <strain>Fw109-5</strain>
    </source>
</reference>
<organism>
    <name type="scientific">Anaeromyxobacter sp. (strain Fw109-5)</name>
    <dbReference type="NCBI Taxonomy" id="404589"/>
    <lineage>
        <taxon>Bacteria</taxon>
        <taxon>Pseudomonadati</taxon>
        <taxon>Myxococcota</taxon>
        <taxon>Myxococcia</taxon>
        <taxon>Myxococcales</taxon>
        <taxon>Cystobacterineae</taxon>
        <taxon>Anaeromyxobacteraceae</taxon>
        <taxon>Anaeromyxobacter</taxon>
    </lineage>
</organism>
<keyword id="KW-0067">ATP-binding</keyword>
<keyword id="KW-0093">Biotin biosynthesis</keyword>
<keyword id="KW-0963">Cytoplasm</keyword>
<keyword id="KW-0436">Ligase</keyword>
<keyword id="KW-0460">Magnesium</keyword>
<keyword id="KW-0479">Metal-binding</keyword>
<keyword id="KW-0547">Nucleotide-binding</keyword>
<keyword id="KW-1185">Reference proteome</keyword>
<evidence type="ECO:0000255" key="1">
    <source>
        <dbReference type="HAMAP-Rule" id="MF_00336"/>
    </source>
</evidence>
<name>BIOD_ANADF</name>
<gene>
    <name evidence="1" type="primary">bioD</name>
    <name type="ordered locus">Anae109_0071</name>
</gene>
<protein>
    <recommendedName>
        <fullName evidence="1">ATP-dependent dethiobiotin synthetase BioD</fullName>
        <ecNumber evidence="1">6.3.3.3</ecNumber>
    </recommendedName>
    <alternativeName>
        <fullName evidence="1">DTB synthetase</fullName>
        <shortName evidence="1">DTBS</shortName>
    </alternativeName>
    <alternativeName>
        <fullName evidence="1">Dethiobiotin synthase</fullName>
    </alternativeName>
</protein>
<feature type="chain" id="PRO_1000019547" description="ATP-dependent dethiobiotin synthetase BioD">
    <location>
        <begin position="1"/>
        <end position="223"/>
    </location>
</feature>
<feature type="active site" evidence="1">
    <location>
        <position position="37"/>
    </location>
</feature>
<feature type="binding site" evidence="1">
    <location>
        <position position="16"/>
    </location>
    <ligand>
        <name>Mg(2+)</name>
        <dbReference type="ChEBI" id="CHEBI:18420"/>
    </ligand>
</feature>
<feature type="binding site" evidence="1">
    <location>
        <position position="41"/>
    </location>
    <ligand>
        <name>substrate</name>
    </ligand>
</feature>
<feature type="binding site" evidence="1">
    <location>
        <position position="50"/>
    </location>
    <ligand>
        <name>ATP</name>
        <dbReference type="ChEBI" id="CHEBI:30616"/>
    </ligand>
</feature>
<feature type="binding site" evidence="1">
    <location>
        <position position="50"/>
    </location>
    <ligand>
        <name>Mg(2+)</name>
        <dbReference type="ChEBI" id="CHEBI:18420"/>
    </ligand>
</feature>
<feature type="binding site" evidence="1">
    <location>
        <begin position="111"/>
        <end position="114"/>
    </location>
    <ligand>
        <name>ATP</name>
        <dbReference type="ChEBI" id="CHEBI:30616"/>
    </ligand>
</feature>
<feature type="binding site" evidence="1">
    <location>
        <position position="111"/>
    </location>
    <ligand>
        <name>Mg(2+)</name>
        <dbReference type="ChEBI" id="CHEBI:18420"/>
    </ligand>
</feature>
<feature type="binding site" evidence="1">
    <location>
        <begin position="171"/>
        <end position="172"/>
    </location>
    <ligand>
        <name>ATP</name>
        <dbReference type="ChEBI" id="CHEBI:30616"/>
    </ligand>
</feature>
<feature type="binding site" evidence="1">
    <location>
        <begin position="201"/>
        <end position="203"/>
    </location>
    <ligand>
        <name>ATP</name>
        <dbReference type="ChEBI" id="CHEBI:30616"/>
    </ligand>
</feature>
<feature type="binding site" evidence="1">
    <location>
        <position position="208"/>
    </location>
    <ligand>
        <name>ATP</name>
        <dbReference type="ChEBI" id="CHEBI:30616"/>
    </ligand>
</feature>
<accession>A7H6E5</accession>
<sequence>MRGLFITGTDTGVGKTEVTCALVANARAAGLDAVPMKPAQSGVAPGEPTDADRLHAACDGAEPLEVLCPYSFAAPLAPAVAARLEGRQVSFGAIVDGVRALAARHEAVLVEGAGGLLVPLTEEETYADLAVALGLSVLVVARAGLGTVNHTALTVEALRARGLVLTAIVLNQACETDDPSVPYNPAEIARVTGREPLARLAHVRDIAERQRFLRSRLAGKIQF</sequence>
<comment type="function">
    <text evidence="1">Catalyzes a mechanistically unusual reaction, the ATP-dependent insertion of CO2 between the N7 and N8 nitrogen atoms of 7,8-diaminopelargonic acid (DAPA, also called 7,8-diammoniononanoate) to form a ureido ring.</text>
</comment>
<comment type="catalytic activity">
    <reaction evidence="1">
        <text>(7R,8S)-7,8-diammoniononanoate + CO2 + ATP = (4R,5S)-dethiobiotin + ADP + phosphate + 3 H(+)</text>
        <dbReference type="Rhea" id="RHEA:15805"/>
        <dbReference type="ChEBI" id="CHEBI:15378"/>
        <dbReference type="ChEBI" id="CHEBI:16526"/>
        <dbReference type="ChEBI" id="CHEBI:30616"/>
        <dbReference type="ChEBI" id="CHEBI:43474"/>
        <dbReference type="ChEBI" id="CHEBI:149469"/>
        <dbReference type="ChEBI" id="CHEBI:149473"/>
        <dbReference type="ChEBI" id="CHEBI:456216"/>
        <dbReference type="EC" id="6.3.3.3"/>
    </reaction>
</comment>
<comment type="cofactor">
    <cofactor evidence="1">
        <name>Mg(2+)</name>
        <dbReference type="ChEBI" id="CHEBI:18420"/>
    </cofactor>
</comment>
<comment type="pathway">
    <text evidence="1">Cofactor biosynthesis; biotin biosynthesis; biotin from 7,8-diaminononanoate: step 1/2.</text>
</comment>
<comment type="subunit">
    <text evidence="1">Homodimer.</text>
</comment>
<comment type="subcellular location">
    <subcellularLocation>
        <location evidence="1">Cytoplasm</location>
    </subcellularLocation>
</comment>
<comment type="similarity">
    <text evidence="1">Belongs to the dethiobiotin synthetase family.</text>
</comment>
<dbReference type="EC" id="6.3.3.3" evidence="1"/>
<dbReference type="EMBL" id="CP000769">
    <property type="protein sequence ID" value="ABS24291.1"/>
    <property type="molecule type" value="Genomic_DNA"/>
</dbReference>
<dbReference type="RefSeq" id="WP_011984397.1">
    <property type="nucleotide sequence ID" value="NC_009675.1"/>
</dbReference>
<dbReference type="SMR" id="A7H6E5"/>
<dbReference type="STRING" id="404589.Anae109_0071"/>
<dbReference type="KEGG" id="afw:Anae109_0071"/>
<dbReference type="eggNOG" id="COG0132">
    <property type="taxonomic scope" value="Bacteria"/>
</dbReference>
<dbReference type="HOGENOM" id="CLU_072551_1_0_7"/>
<dbReference type="OrthoDB" id="9802097at2"/>
<dbReference type="UniPathway" id="UPA00078">
    <property type="reaction ID" value="UER00161"/>
</dbReference>
<dbReference type="Proteomes" id="UP000006382">
    <property type="component" value="Chromosome"/>
</dbReference>
<dbReference type="GO" id="GO:0005829">
    <property type="term" value="C:cytosol"/>
    <property type="evidence" value="ECO:0007669"/>
    <property type="project" value="TreeGrafter"/>
</dbReference>
<dbReference type="GO" id="GO:0005524">
    <property type="term" value="F:ATP binding"/>
    <property type="evidence" value="ECO:0007669"/>
    <property type="project" value="UniProtKB-UniRule"/>
</dbReference>
<dbReference type="GO" id="GO:0004141">
    <property type="term" value="F:dethiobiotin synthase activity"/>
    <property type="evidence" value="ECO:0007669"/>
    <property type="project" value="UniProtKB-UniRule"/>
</dbReference>
<dbReference type="GO" id="GO:0000287">
    <property type="term" value="F:magnesium ion binding"/>
    <property type="evidence" value="ECO:0007669"/>
    <property type="project" value="UniProtKB-UniRule"/>
</dbReference>
<dbReference type="GO" id="GO:0009102">
    <property type="term" value="P:biotin biosynthetic process"/>
    <property type="evidence" value="ECO:0007669"/>
    <property type="project" value="UniProtKB-UniRule"/>
</dbReference>
<dbReference type="CDD" id="cd03109">
    <property type="entry name" value="DTBS"/>
    <property type="match status" value="1"/>
</dbReference>
<dbReference type="Gene3D" id="3.40.50.300">
    <property type="entry name" value="P-loop containing nucleotide triphosphate hydrolases"/>
    <property type="match status" value="1"/>
</dbReference>
<dbReference type="HAMAP" id="MF_00336">
    <property type="entry name" value="BioD"/>
    <property type="match status" value="1"/>
</dbReference>
<dbReference type="InterPro" id="IPR004472">
    <property type="entry name" value="DTB_synth_BioD"/>
</dbReference>
<dbReference type="InterPro" id="IPR027417">
    <property type="entry name" value="P-loop_NTPase"/>
</dbReference>
<dbReference type="NCBIfam" id="TIGR00347">
    <property type="entry name" value="bioD"/>
    <property type="match status" value="1"/>
</dbReference>
<dbReference type="PANTHER" id="PTHR43210">
    <property type="entry name" value="DETHIOBIOTIN SYNTHETASE"/>
    <property type="match status" value="1"/>
</dbReference>
<dbReference type="PANTHER" id="PTHR43210:SF5">
    <property type="entry name" value="DETHIOBIOTIN SYNTHETASE"/>
    <property type="match status" value="1"/>
</dbReference>
<dbReference type="Pfam" id="PF13500">
    <property type="entry name" value="AAA_26"/>
    <property type="match status" value="1"/>
</dbReference>
<dbReference type="PIRSF" id="PIRSF006755">
    <property type="entry name" value="DTB_synth"/>
    <property type="match status" value="1"/>
</dbReference>
<dbReference type="SUPFAM" id="SSF52540">
    <property type="entry name" value="P-loop containing nucleoside triphosphate hydrolases"/>
    <property type="match status" value="1"/>
</dbReference>